<dbReference type="EMBL" id="BC045965">
    <property type="protein sequence ID" value="AAH45965.1"/>
    <property type="molecule type" value="mRNA"/>
</dbReference>
<dbReference type="RefSeq" id="NP_956018.1">
    <property type="nucleotide sequence ID" value="NM_199724.1"/>
</dbReference>
<dbReference type="PDB" id="7OYA">
    <property type="method" value="EM"/>
    <property type="resolution" value="3.20 A"/>
    <property type="chains" value="Z1=1-136"/>
</dbReference>
<dbReference type="PDB" id="7OYB">
    <property type="method" value="EM"/>
    <property type="resolution" value="2.40 A"/>
    <property type="chains" value="Z1=1-136"/>
</dbReference>
<dbReference type="PDBsum" id="7OYA"/>
<dbReference type="PDBsum" id="7OYB"/>
<dbReference type="EMDB" id="EMD-13111"/>
<dbReference type="EMDB" id="EMD-13112"/>
<dbReference type="SMR" id="Q7ZV82"/>
<dbReference type="BioGRID" id="83546">
    <property type="interactions" value="1"/>
</dbReference>
<dbReference type="FunCoup" id="Q7ZV82">
    <property type="interactions" value="2486"/>
</dbReference>
<dbReference type="STRING" id="7955.ENSDARP00000018737"/>
<dbReference type="PaxDb" id="7955-ENSDARP00000117864"/>
<dbReference type="Ensembl" id="ENSDART00000020311">
    <property type="protein sequence ID" value="ENSDARP00000018737"/>
    <property type="gene ID" value="ENSDARG00000015128"/>
</dbReference>
<dbReference type="Ensembl" id="ENSDART00000140518">
    <property type="protein sequence ID" value="ENSDARP00000117864"/>
    <property type="gene ID" value="ENSDARG00000015128"/>
</dbReference>
<dbReference type="GeneID" id="325618"/>
<dbReference type="KEGG" id="dre:325618"/>
<dbReference type="AGR" id="ZFIN:ZDB-GENE-030131-4343"/>
<dbReference type="CTD" id="6155"/>
<dbReference type="ZFIN" id="ZDB-GENE-030131-4343">
    <property type="gene designation" value="rpl27"/>
</dbReference>
<dbReference type="eggNOG" id="KOG3418">
    <property type="taxonomic scope" value="Eukaryota"/>
</dbReference>
<dbReference type="HOGENOM" id="CLU_067359_0_1_1"/>
<dbReference type="InParanoid" id="Q7ZV82"/>
<dbReference type="OMA" id="NQWFFTK"/>
<dbReference type="OrthoDB" id="2365484at2759"/>
<dbReference type="PhylomeDB" id="Q7ZV82"/>
<dbReference type="TreeFam" id="TF314648"/>
<dbReference type="Reactome" id="R-DRE-156827">
    <property type="pathway name" value="L13a-mediated translational silencing of Ceruloplasmin expression"/>
</dbReference>
<dbReference type="Reactome" id="R-DRE-1799339">
    <property type="pathway name" value="SRP-dependent cotranslational protein targeting to membrane"/>
</dbReference>
<dbReference type="Reactome" id="R-DRE-72689">
    <property type="pathway name" value="Formation of a pool of free 40S subunits"/>
</dbReference>
<dbReference type="Reactome" id="R-DRE-975956">
    <property type="pathway name" value="Nonsense Mediated Decay (NMD) independent of the Exon Junction Complex (EJC)"/>
</dbReference>
<dbReference type="Reactome" id="R-DRE-975957">
    <property type="pathway name" value="Nonsense Mediated Decay (NMD) enhanced by the Exon Junction Complex (EJC)"/>
</dbReference>
<dbReference type="PRO" id="PR:Q7ZV82"/>
<dbReference type="Proteomes" id="UP000000437">
    <property type="component" value="Chromosome 3"/>
</dbReference>
<dbReference type="Bgee" id="ENSDARG00000015128">
    <property type="expression patterns" value="Expressed in pharyngeal gill and 32 other cell types or tissues"/>
</dbReference>
<dbReference type="ExpressionAtlas" id="Q7ZV82">
    <property type="expression patterns" value="baseline and differential"/>
</dbReference>
<dbReference type="GO" id="GO:0098556">
    <property type="term" value="C:cytoplasmic side of rough endoplasmic reticulum membrane"/>
    <property type="evidence" value="ECO:0000250"/>
    <property type="project" value="UniProtKB"/>
</dbReference>
<dbReference type="GO" id="GO:0022625">
    <property type="term" value="C:cytosolic large ribosomal subunit"/>
    <property type="evidence" value="ECO:0000318"/>
    <property type="project" value="GO_Central"/>
</dbReference>
<dbReference type="GO" id="GO:0015934">
    <property type="term" value="C:large ribosomal subunit"/>
    <property type="evidence" value="ECO:0000250"/>
    <property type="project" value="UniProtKB"/>
</dbReference>
<dbReference type="GO" id="GO:0003735">
    <property type="term" value="F:structural constituent of ribosome"/>
    <property type="evidence" value="ECO:0000318"/>
    <property type="project" value="GO_Central"/>
</dbReference>
<dbReference type="GO" id="GO:0030218">
    <property type="term" value="P:erythrocyte differentiation"/>
    <property type="evidence" value="ECO:0000315"/>
    <property type="project" value="ZFIN"/>
</dbReference>
<dbReference type="GO" id="GO:0006412">
    <property type="term" value="P:translation"/>
    <property type="evidence" value="ECO:0007669"/>
    <property type="project" value="InterPro"/>
</dbReference>
<dbReference type="CDD" id="cd06090">
    <property type="entry name" value="KOW_RPL27"/>
    <property type="match status" value="1"/>
</dbReference>
<dbReference type="FunFam" id="2.30.30.770:FF:000001">
    <property type="entry name" value="60S ribosomal protein L27"/>
    <property type="match status" value="1"/>
</dbReference>
<dbReference type="Gene3D" id="2.30.30.770">
    <property type="match status" value="1"/>
</dbReference>
<dbReference type="InterPro" id="IPR005824">
    <property type="entry name" value="KOW"/>
</dbReference>
<dbReference type="InterPro" id="IPR001141">
    <property type="entry name" value="Ribosomal_eL27"/>
</dbReference>
<dbReference type="InterPro" id="IPR018262">
    <property type="entry name" value="Ribosomal_eL27_CS"/>
</dbReference>
<dbReference type="InterPro" id="IPR041991">
    <property type="entry name" value="Ribosomal_eL27_KOW"/>
</dbReference>
<dbReference type="InterPro" id="IPR038655">
    <property type="entry name" value="Ribosomal_eL27_sf"/>
</dbReference>
<dbReference type="InterPro" id="IPR008991">
    <property type="entry name" value="Translation_prot_SH3-like_sf"/>
</dbReference>
<dbReference type="PANTHER" id="PTHR10497">
    <property type="entry name" value="60S RIBOSOMAL PROTEIN L27"/>
    <property type="match status" value="1"/>
</dbReference>
<dbReference type="Pfam" id="PF00467">
    <property type="entry name" value="KOW"/>
    <property type="match status" value="1"/>
</dbReference>
<dbReference type="Pfam" id="PF01777">
    <property type="entry name" value="Ribosomal_L27e"/>
    <property type="match status" value="1"/>
</dbReference>
<dbReference type="SMART" id="SM00739">
    <property type="entry name" value="KOW"/>
    <property type="match status" value="1"/>
</dbReference>
<dbReference type="SUPFAM" id="SSF50104">
    <property type="entry name" value="Translation proteins SH3-like domain"/>
    <property type="match status" value="1"/>
</dbReference>
<dbReference type="PROSITE" id="PS01107">
    <property type="entry name" value="RIBOSOMAL_L27E"/>
    <property type="match status" value="1"/>
</dbReference>
<protein>
    <recommendedName>
        <fullName evidence="3">Large ribosomal subunit protein eL27</fullName>
    </recommendedName>
    <alternativeName>
        <fullName>60S ribosomal protein L27</fullName>
    </alternativeName>
</protein>
<reference key="1">
    <citation type="submission" date="2003-01" db="EMBL/GenBank/DDBJ databases">
        <authorList>
            <consortium name="NIH - Zebrafish Gene Collection (ZGC) project"/>
        </authorList>
    </citation>
    <scope>NUCLEOTIDE SEQUENCE [LARGE SCALE MRNA]</scope>
</reference>
<proteinExistence type="evidence at protein level"/>
<accession>Q7ZV82</accession>
<comment type="function">
    <text evidence="2">Component of the large ribosomal subunit.</text>
</comment>
<comment type="subunit">
    <text evidence="2">Component of the large ribosomal subunit.</text>
</comment>
<comment type="subcellular location">
    <subcellularLocation>
        <location evidence="2">Cytoplasm</location>
        <location evidence="2">Cytosol</location>
    </subcellularLocation>
    <subcellularLocation>
        <location evidence="2">Cytoplasm</location>
    </subcellularLocation>
    <subcellularLocation>
        <location evidence="1">Rough endoplasmic reticulum</location>
    </subcellularLocation>
    <text evidence="1 2">Detected on cytosolic polysomes (By similarity). Detected in ribosomes that are associated with the rough endoplasmic reticulum (By similarity).</text>
</comment>
<comment type="similarity">
    <text evidence="3">Belongs to the eukaryotic ribosomal protein eL27 family.</text>
</comment>
<evidence type="ECO:0000250" key="1">
    <source>
        <dbReference type="UniProtKB" id="A1XQU5"/>
    </source>
</evidence>
<evidence type="ECO:0000250" key="2">
    <source>
        <dbReference type="UniProtKB" id="P61353"/>
    </source>
</evidence>
<evidence type="ECO:0000305" key="3"/>
<name>RL27_DANRE</name>
<gene>
    <name type="primary">rpl27</name>
    <name type="ORF">zgc:56171</name>
</gene>
<keyword id="KW-0002">3D-structure</keyword>
<keyword id="KW-0963">Cytoplasm</keyword>
<keyword id="KW-0256">Endoplasmic reticulum</keyword>
<keyword id="KW-1185">Reference proteome</keyword>
<keyword id="KW-0687">Ribonucleoprotein</keyword>
<keyword id="KW-0689">Ribosomal protein</keyword>
<sequence>MGKFMKPGKVVMVLAGRYAGRKAVIVKNIDDGTADRPYSHALVAGIDRYPRKVTATMGKKKIAKRSKIKAFVKVFNYNHLMPTRYSVDIPLDKTVVNKDVFRDPALKRKARREAKVKFEERYKTGKNKWFFQKLRF</sequence>
<feature type="chain" id="PRO_0000126081" description="Large ribosomal subunit protein eL27">
    <location>
        <begin position="1"/>
        <end position="136"/>
    </location>
</feature>
<feature type="domain" description="KOW">
    <location>
        <begin position="5"/>
        <end position="40"/>
    </location>
</feature>
<organism>
    <name type="scientific">Danio rerio</name>
    <name type="common">Zebrafish</name>
    <name type="synonym">Brachydanio rerio</name>
    <dbReference type="NCBI Taxonomy" id="7955"/>
    <lineage>
        <taxon>Eukaryota</taxon>
        <taxon>Metazoa</taxon>
        <taxon>Chordata</taxon>
        <taxon>Craniata</taxon>
        <taxon>Vertebrata</taxon>
        <taxon>Euteleostomi</taxon>
        <taxon>Actinopterygii</taxon>
        <taxon>Neopterygii</taxon>
        <taxon>Teleostei</taxon>
        <taxon>Ostariophysi</taxon>
        <taxon>Cypriniformes</taxon>
        <taxon>Danionidae</taxon>
        <taxon>Danioninae</taxon>
        <taxon>Danio</taxon>
    </lineage>
</organism>